<reference key="1">
    <citation type="journal article" date="2010" name="Genome Biol. Evol.">
        <title>Continuing evolution of Burkholderia mallei through genome reduction and large-scale rearrangements.</title>
        <authorList>
            <person name="Losada L."/>
            <person name="Ronning C.M."/>
            <person name="DeShazer D."/>
            <person name="Woods D."/>
            <person name="Fedorova N."/>
            <person name="Kim H.S."/>
            <person name="Shabalina S.A."/>
            <person name="Pearson T.R."/>
            <person name="Brinkac L."/>
            <person name="Tan P."/>
            <person name="Nandi T."/>
            <person name="Crabtree J."/>
            <person name="Badger J."/>
            <person name="Beckstrom-Sternberg S."/>
            <person name="Saqib M."/>
            <person name="Schutzer S.E."/>
            <person name="Keim P."/>
            <person name="Nierman W.C."/>
        </authorList>
    </citation>
    <scope>NUCLEOTIDE SEQUENCE [LARGE SCALE GENOMIC DNA]</scope>
    <source>
        <strain>1106a</strain>
    </source>
</reference>
<dbReference type="EC" id="3.1.-.-" evidence="1"/>
<dbReference type="EMBL" id="CP000572">
    <property type="protein sequence ID" value="ABN91338.1"/>
    <property type="molecule type" value="Genomic_DNA"/>
</dbReference>
<dbReference type="SMR" id="A3NYG4"/>
<dbReference type="KEGG" id="bpl:BURPS1106A_3147"/>
<dbReference type="HOGENOM" id="CLU_098240_3_2_4"/>
<dbReference type="Proteomes" id="UP000006738">
    <property type="component" value="Chromosome I"/>
</dbReference>
<dbReference type="GO" id="GO:0005829">
    <property type="term" value="C:cytosol"/>
    <property type="evidence" value="ECO:0007669"/>
    <property type="project" value="TreeGrafter"/>
</dbReference>
<dbReference type="GO" id="GO:0004518">
    <property type="term" value="F:nuclease activity"/>
    <property type="evidence" value="ECO:0007669"/>
    <property type="project" value="UniProtKB-KW"/>
</dbReference>
<dbReference type="GO" id="GO:0000967">
    <property type="term" value="P:rRNA 5'-end processing"/>
    <property type="evidence" value="ECO:0007669"/>
    <property type="project" value="UniProtKB-UniRule"/>
</dbReference>
<dbReference type="CDD" id="cd16964">
    <property type="entry name" value="YqgF"/>
    <property type="match status" value="1"/>
</dbReference>
<dbReference type="Gene3D" id="3.30.420.140">
    <property type="entry name" value="YqgF/RNase H-like domain"/>
    <property type="match status" value="1"/>
</dbReference>
<dbReference type="HAMAP" id="MF_00651">
    <property type="entry name" value="Nuclease_YqgF"/>
    <property type="match status" value="1"/>
</dbReference>
<dbReference type="InterPro" id="IPR012337">
    <property type="entry name" value="RNaseH-like_sf"/>
</dbReference>
<dbReference type="InterPro" id="IPR005227">
    <property type="entry name" value="YqgF"/>
</dbReference>
<dbReference type="InterPro" id="IPR006641">
    <property type="entry name" value="YqgF/RNaseH-like_dom"/>
</dbReference>
<dbReference type="InterPro" id="IPR037027">
    <property type="entry name" value="YqgF/RNaseH-like_dom_sf"/>
</dbReference>
<dbReference type="NCBIfam" id="TIGR00250">
    <property type="entry name" value="RNAse_H_YqgF"/>
    <property type="match status" value="1"/>
</dbReference>
<dbReference type="PANTHER" id="PTHR33317">
    <property type="entry name" value="POLYNUCLEOTIDYL TRANSFERASE, RIBONUCLEASE H-LIKE SUPERFAMILY PROTEIN"/>
    <property type="match status" value="1"/>
</dbReference>
<dbReference type="PANTHER" id="PTHR33317:SF4">
    <property type="entry name" value="POLYNUCLEOTIDYL TRANSFERASE, RIBONUCLEASE H-LIKE SUPERFAMILY PROTEIN"/>
    <property type="match status" value="1"/>
</dbReference>
<dbReference type="Pfam" id="PF03652">
    <property type="entry name" value="RuvX"/>
    <property type="match status" value="1"/>
</dbReference>
<dbReference type="SMART" id="SM00732">
    <property type="entry name" value="YqgFc"/>
    <property type="match status" value="1"/>
</dbReference>
<dbReference type="SUPFAM" id="SSF53098">
    <property type="entry name" value="Ribonuclease H-like"/>
    <property type="match status" value="1"/>
</dbReference>
<keyword id="KW-0963">Cytoplasm</keyword>
<keyword id="KW-0378">Hydrolase</keyword>
<keyword id="KW-0540">Nuclease</keyword>
<keyword id="KW-0690">Ribosome biogenesis</keyword>
<protein>
    <recommendedName>
        <fullName evidence="1">Putative pre-16S rRNA nuclease</fullName>
        <ecNumber evidence="1">3.1.-.-</ecNumber>
    </recommendedName>
</protein>
<comment type="function">
    <text evidence="1">Could be a nuclease involved in processing of the 5'-end of pre-16S rRNA.</text>
</comment>
<comment type="subcellular location">
    <subcellularLocation>
        <location evidence="1">Cytoplasm</location>
    </subcellularLocation>
</comment>
<comment type="similarity">
    <text evidence="1">Belongs to the YqgF nuclease family.</text>
</comment>
<sequence length="146" mass="16240">MSAALSRDATLLAFDYGEKRIGVAVGNLLTRTARALVIVRNLNREHRFKAVGELIAEWKPDALVVGLPLHPDGAPHEMTQRAMRFGNQLNGRFNLPVSWVDERYSSVEARAGLRARGDAADRVDAEAARVILQQYLDGLPDHHEFN</sequence>
<name>YQGF_BURP0</name>
<evidence type="ECO:0000255" key="1">
    <source>
        <dbReference type="HAMAP-Rule" id="MF_00651"/>
    </source>
</evidence>
<accession>A3NYG4</accession>
<proteinExistence type="inferred from homology"/>
<feature type="chain" id="PRO_1000061496" description="Putative pre-16S rRNA nuclease">
    <location>
        <begin position="1"/>
        <end position="146"/>
    </location>
</feature>
<gene>
    <name type="ordered locus">BURPS1106A_3147</name>
</gene>
<organism>
    <name type="scientific">Burkholderia pseudomallei (strain 1106a)</name>
    <dbReference type="NCBI Taxonomy" id="357348"/>
    <lineage>
        <taxon>Bacteria</taxon>
        <taxon>Pseudomonadati</taxon>
        <taxon>Pseudomonadota</taxon>
        <taxon>Betaproteobacteria</taxon>
        <taxon>Burkholderiales</taxon>
        <taxon>Burkholderiaceae</taxon>
        <taxon>Burkholderia</taxon>
        <taxon>pseudomallei group</taxon>
    </lineage>
</organism>